<keyword id="KW-0067">ATP-binding</keyword>
<keyword id="KW-0963">Cytoplasm</keyword>
<keyword id="KW-0418">Kinase</keyword>
<keyword id="KW-0547">Nucleotide-binding</keyword>
<keyword id="KW-0808">Transferase</keyword>
<organism>
    <name type="scientific">Chlamydia pneumoniae</name>
    <name type="common">Chlamydophila pneumoniae</name>
    <dbReference type="NCBI Taxonomy" id="83558"/>
    <lineage>
        <taxon>Bacteria</taxon>
        <taxon>Pseudomonadati</taxon>
        <taxon>Chlamydiota</taxon>
        <taxon>Chlamydiia</taxon>
        <taxon>Chlamydiales</taxon>
        <taxon>Chlamydiaceae</taxon>
        <taxon>Chlamydia/Chlamydophila group</taxon>
        <taxon>Chlamydia</taxon>
    </lineage>
</organism>
<accession>Q9Z961</accession>
<reference key="1">
    <citation type="journal article" date="1999" name="Nat. Genet.">
        <title>Comparative genomes of Chlamydia pneumoniae and C. trachomatis.</title>
        <authorList>
            <person name="Kalman S."/>
            <person name="Mitchell W.P."/>
            <person name="Marathe R."/>
            <person name="Lammel C.J."/>
            <person name="Fan J."/>
            <person name="Hyman R.W."/>
            <person name="Olinger L."/>
            <person name="Grimwood J."/>
            <person name="Davis R.W."/>
            <person name="Stephens R.S."/>
        </authorList>
    </citation>
    <scope>NUCLEOTIDE SEQUENCE [LARGE SCALE GENOMIC DNA]</scope>
    <source>
        <strain>CWL029</strain>
    </source>
</reference>
<reference key="2">
    <citation type="journal article" date="2000" name="Nucleic Acids Res.">
        <title>Genome sequences of Chlamydia trachomatis MoPn and Chlamydia pneumoniae AR39.</title>
        <authorList>
            <person name="Read T.D."/>
            <person name="Brunham R.C."/>
            <person name="Shen C."/>
            <person name="Gill S.R."/>
            <person name="Heidelberg J.F."/>
            <person name="White O."/>
            <person name="Hickey E.K."/>
            <person name="Peterson J.D."/>
            <person name="Utterback T.R."/>
            <person name="Berry K.J."/>
            <person name="Bass S."/>
            <person name="Linher K.D."/>
            <person name="Weidman J.F."/>
            <person name="Khouri H.M."/>
            <person name="Craven B."/>
            <person name="Bowman C."/>
            <person name="Dodson R.J."/>
            <person name="Gwinn M.L."/>
            <person name="Nelson W.C."/>
            <person name="DeBoy R.T."/>
            <person name="Kolonay J.F."/>
            <person name="McClarty G."/>
            <person name="Salzberg S.L."/>
            <person name="Eisen J.A."/>
            <person name="Fraser C.M."/>
        </authorList>
    </citation>
    <scope>NUCLEOTIDE SEQUENCE [LARGE SCALE GENOMIC DNA]</scope>
    <source>
        <strain>AR39</strain>
    </source>
</reference>
<reference key="3">
    <citation type="journal article" date="2000" name="Nucleic Acids Res.">
        <title>Comparison of whole genome sequences of Chlamydia pneumoniae J138 from Japan and CWL029 from USA.</title>
        <authorList>
            <person name="Shirai M."/>
            <person name="Hirakawa H."/>
            <person name="Kimoto M."/>
            <person name="Tabuchi M."/>
            <person name="Kishi F."/>
            <person name="Ouchi K."/>
            <person name="Shiba T."/>
            <person name="Ishii K."/>
            <person name="Hattori M."/>
            <person name="Kuhara S."/>
            <person name="Nakazawa T."/>
        </authorList>
    </citation>
    <scope>NUCLEOTIDE SEQUENCE [LARGE SCALE GENOMIC DNA]</scope>
    <source>
        <strain>J138</strain>
    </source>
</reference>
<reference key="4">
    <citation type="submission" date="2002-05" db="EMBL/GenBank/DDBJ databases">
        <title>The genome sequence of Chlamydia pneumoniae TW183 and comparison with other Chlamydia strains based on whole genome sequence analysis.</title>
        <authorList>
            <person name="Geng M.M."/>
            <person name="Schuhmacher A."/>
            <person name="Muehldorfer I."/>
            <person name="Bensch K.W."/>
            <person name="Schaefer K.P."/>
            <person name="Schneider S."/>
            <person name="Pohl T."/>
            <person name="Essig A."/>
            <person name="Marre R."/>
            <person name="Melchers K."/>
        </authorList>
    </citation>
    <scope>NUCLEOTIDE SEQUENCE [LARGE SCALE GENOMIC DNA]</scope>
    <source>
        <strain>TW-183</strain>
    </source>
</reference>
<dbReference type="EC" id="2.7.4.8"/>
<dbReference type="EMBL" id="AE001363">
    <property type="protein sequence ID" value="AAD18273.1"/>
    <property type="molecule type" value="Genomic_DNA"/>
</dbReference>
<dbReference type="EMBL" id="AE002161">
    <property type="protein sequence ID" value="AAF38468.1"/>
    <property type="molecule type" value="Genomic_DNA"/>
</dbReference>
<dbReference type="EMBL" id="BA000008">
    <property type="protein sequence ID" value="BAA98331.1"/>
    <property type="molecule type" value="Genomic_DNA"/>
</dbReference>
<dbReference type="EMBL" id="AE009440">
    <property type="protein sequence ID" value="AAP98054.1"/>
    <property type="status" value="ALT_INIT"/>
    <property type="molecule type" value="Genomic_DNA"/>
</dbReference>
<dbReference type="PIR" id="A86506">
    <property type="entry name" value="A86506"/>
</dbReference>
<dbReference type="PIR" id="F72117">
    <property type="entry name" value="F72117"/>
</dbReference>
<dbReference type="RefSeq" id="NP_224328.1">
    <property type="nucleotide sequence ID" value="NC_000922.1"/>
</dbReference>
<dbReference type="RefSeq" id="WP_010882770.1">
    <property type="nucleotide sequence ID" value="NZ_LN847257.1"/>
</dbReference>
<dbReference type="SMR" id="Q9Z961"/>
<dbReference type="STRING" id="406984.CPK_ORF00632"/>
<dbReference type="GeneID" id="45050165"/>
<dbReference type="KEGG" id="cpa:CP_0653"/>
<dbReference type="KEGG" id="cpj:gmk"/>
<dbReference type="KEGG" id="cpn:CPn_0120"/>
<dbReference type="KEGG" id="cpt:CpB0121"/>
<dbReference type="PATRIC" id="fig|115713.3.peg.135"/>
<dbReference type="eggNOG" id="COG0194">
    <property type="taxonomic scope" value="Bacteria"/>
</dbReference>
<dbReference type="HOGENOM" id="CLU_001715_1_1_0"/>
<dbReference type="OrthoDB" id="9808150at2"/>
<dbReference type="Proteomes" id="UP000000583">
    <property type="component" value="Chromosome"/>
</dbReference>
<dbReference type="Proteomes" id="UP000000801">
    <property type="component" value="Chromosome"/>
</dbReference>
<dbReference type="GO" id="GO:0005829">
    <property type="term" value="C:cytosol"/>
    <property type="evidence" value="ECO:0007669"/>
    <property type="project" value="TreeGrafter"/>
</dbReference>
<dbReference type="GO" id="GO:0005524">
    <property type="term" value="F:ATP binding"/>
    <property type="evidence" value="ECO:0007669"/>
    <property type="project" value="UniProtKB-UniRule"/>
</dbReference>
<dbReference type="GO" id="GO:0004385">
    <property type="term" value="F:guanylate kinase activity"/>
    <property type="evidence" value="ECO:0007669"/>
    <property type="project" value="UniProtKB-UniRule"/>
</dbReference>
<dbReference type="CDD" id="cd00071">
    <property type="entry name" value="GMPK"/>
    <property type="match status" value="1"/>
</dbReference>
<dbReference type="FunFam" id="3.30.63.10:FF:000002">
    <property type="entry name" value="Guanylate kinase 1"/>
    <property type="match status" value="1"/>
</dbReference>
<dbReference type="Gene3D" id="3.40.50.300">
    <property type="entry name" value="P-loop containing nucleotide triphosphate hydrolases"/>
    <property type="match status" value="1"/>
</dbReference>
<dbReference type="HAMAP" id="MF_00328">
    <property type="entry name" value="Guanylate_kinase"/>
    <property type="match status" value="1"/>
</dbReference>
<dbReference type="InterPro" id="IPR008145">
    <property type="entry name" value="GK/Ca_channel_bsu"/>
</dbReference>
<dbReference type="InterPro" id="IPR008144">
    <property type="entry name" value="Guanylate_kin-like_dom"/>
</dbReference>
<dbReference type="InterPro" id="IPR017665">
    <property type="entry name" value="Guanylate_kinase"/>
</dbReference>
<dbReference type="InterPro" id="IPR020590">
    <property type="entry name" value="Guanylate_kinase_CS"/>
</dbReference>
<dbReference type="InterPro" id="IPR027417">
    <property type="entry name" value="P-loop_NTPase"/>
</dbReference>
<dbReference type="NCBIfam" id="TIGR03263">
    <property type="entry name" value="guanyl_kin"/>
    <property type="match status" value="1"/>
</dbReference>
<dbReference type="PANTHER" id="PTHR23117:SF13">
    <property type="entry name" value="GUANYLATE KINASE"/>
    <property type="match status" value="1"/>
</dbReference>
<dbReference type="PANTHER" id="PTHR23117">
    <property type="entry name" value="GUANYLATE KINASE-RELATED"/>
    <property type="match status" value="1"/>
</dbReference>
<dbReference type="Pfam" id="PF00625">
    <property type="entry name" value="Guanylate_kin"/>
    <property type="match status" value="1"/>
</dbReference>
<dbReference type="SMART" id="SM00072">
    <property type="entry name" value="GuKc"/>
    <property type="match status" value="1"/>
</dbReference>
<dbReference type="SUPFAM" id="SSF52540">
    <property type="entry name" value="P-loop containing nucleoside triphosphate hydrolases"/>
    <property type="match status" value="1"/>
</dbReference>
<dbReference type="PROSITE" id="PS00856">
    <property type="entry name" value="GUANYLATE_KINASE_1"/>
    <property type="match status" value="1"/>
</dbReference>
<dbReference type="PROSITE" id="PS50052">
    <property type="entry name" value="GUANYLATE_KINASE_2"/>
    <property type="match status" value="1"/>
</dbReference>
<name>KGUA_CHLPN</name>
<gene>
    <name type="primary">gmk</name>
    <name type="ordered locus">CPn_0120</name>
    <name type="ordered locus">CP_0653</name>
    <name type="ordered locus">CpB0121</name>
</gene>
<protein>
    <recommendedName>
        <fullName>Guanylate kinase</fullName>
        <ecNumber>2.7.4.8</ecNumber>
    </recommendedName>
    <alternativeName>
        <fullName>GMP kinase</fullName>
    </alternativeName>
</protein>
<evidence type="ECO:0000250" key="1"/>
<evidence type="ECO:0000305" key="2"/>
<comment type="function">
    <text evidence="1">Essential for recycling GMP and indirectly, cGMP.</text>
</comment>
<comment type="catalytic activity">
    <reaction>
        <text>GMP + ATP = GDP + ADP</text>
        <dbReference type="Rhea" id="RHEA:20780"/>
        <dbReference type="ChEBI" id="CHEBI:30616"/>
        <dbReference type="ChEBI" id="CHEBI:58115"/>
        <dbReference type="ChEBI" id="CHEBI:58189"/>
        <dbReference type="ChEBI" id="CHEBI:456216"/>
        <dbReference type="EC" id="2.7.4.8"/>
    </reaction>
</comment>
<comment type="subcellular location">
    <subcellularLocation>
        <location evidence="1">Cytoplasm</location>
    </subcellularLocation>
</comment>
<comment type="similarity">
    <text evidence="2">Belongs to the guanylate kinase family.</text>
</comment>
<comment type="sequence caution" evidence="2">
    <conflict type="erroneous initiation">
        <sequence resource="EMBL-CDS" id="AAP98054"/>
    </conflict>
</comment>
<feature type="chain" id="PRO_0000170520" description="Guanylate kinase">
    <location>
        <begin position="1"/>
        <end position="205"/>
    </location>
</feature>
<feature type="domain" description="Guanylate kinase-like">
    <location>
        <begin position="19"/>
        <end position="197"/>
    </location>
</feature>
<feature type="binding site" evidence="1">
    <location>
        <begin position="26"/>
        <end position="33"/>
    </location>
    <ligand>
        <name>ATP</name>
        <dbReference type="ChEBI" id="CHEBI:30616"/>
    </ligand>
</feature>
<sequence>MNKILVDSPFSPDHQKCCPKLFTISAPAGVGKTTLVRMLEQEFSSAFAETISVTTRKPREGEVPGKDYHFVSHEEFQRLLDRQALLEWVFLFGECYGTSMLEIERIWSLGKHAVAVIDIQGALFIRSRMPSVSIFIAPPSQEELERRLASRGSEEGSQRKERLEHSLIELAAANQFDYVIINDDLNQAYRVLKSIFIAEEHRNIL</sequence>
<proteinExistence type="inferred from homology"/>